<accession>A8G097</accession>
<sequence>MKRIPEPFRIKMVESIKMTNLEDREQALTQAGLNPFLLRSEDVYIDLLTDSGTGAMSDVQWAGLMMGDESYAGSRNYFNLCESVEHFFGYKLTVPVHQGRGAEQILFPCLIERMRQVRGGTEPIFISNYHFDTTAGHIEMNGGKALNVVTEKAFDTESYYDWKGDFDLDKLRDTIATYGANNIAAIITTVTCNSSGGQPVSMANMRAVYEIAQKHDIPVVIDSARYCENAYFIKQREPGYEDSSMLEIIREMFQYGDMLTLSAKKDPMVNIGGLCCVRDHEELFRAVQTRCVPMEGFVTYGGMAGRDMEALARGMHEGADEDFLHYRVCQVAYLGERLREAGIPIQYPTGGHAVFVDAAKMLPHIPAHQFPAQSLCNALYLEAGIRAVEIGSLLLGREPETGEQKVSPMELMRLTIPRRVYTNDHMDYIADALIAIKDQAASLKGLTFDYEPPVLRHFTAKFNSL</sequence>
<feature type="chain" id="PRO_1000081943" description="Tryptophanase">
    <location>
        <begin position="1"/>
        <end position="465"/>
    </location>
</feature>
<feature type="modified residue" description="N6-(pyridoxal phosphate)lysine" evidence="1">
    <location>
        <position position="265"/>
    </location>
</feature>
<name>TNAA_SHESH</name>
<organism>
    <name type="scientific">Shewanella sediminis (strain HAW-EB3)</name>
    <dbReference type="NCBI Taxonomy" id="425104"/>
    <lineage>
        <taxon>Bacteria</taxon>
        <taxon>Pseudomonadati</taxon>
        <taxon>Pseudomonadota</taxon>
        <taxon>Gammaproteobacteria</taxon>
        <taxon>Alteromonadales</taxon>
        <taxon>Shewanellaceae</taxon>
        <taxon>Shewanella</taxon>
    </lineage>
</organism>
<keyword id="KW-0456">Lyase</keyword>
<keyword id="KW-0663">Pyridoxal phosphate</keyword>
<keyword id="KW-1185">Reference proteome</keyword>
<keyword id="KW-0823">Tryptophan catabolism</keyword>
<reference key="1">
    <citation type="submission" date="2007-08" db="EMBL/GenBank/DDBJ databases">
        <title>Complete sequence of Shewanella sediminis HAW-EB3.</title>
        <authorList>
            <consortium name="US DOE Joint Genome Institute"/>
            <person name="Copeland A."/>
            <person name="Lucas S."/>
            <person name="Lapidus A."/>
            <person name="Barry K."/>
            <person name="Glavina del Rio T."/>
            <person name="Dalin E."/>
            <person name="Tice H."/>
            <person name="Pitluck S."/>
            <person name="Chertkov O."/>
            <person name="Brettin T."/>
            <person name="Bruce D."/>
            <person name="Detter J.C."/>
            <person name="Han C."/>
            <person name="Schmutz J."/>
            <person name="Larimer F."/>
            <person name="Land M."/>
            <person name="Hauser L."/>
            <person name="Kyrpides N."/>
            <person name="Kim E."/>
            <person name="Zhao J.-S."/>
            <person name="Richardson P."/>
        </authorList>
    </citation>
    <scope>NUCLEOTIDE SEQUENCE [LARGE SCALE GENOMIC DNA]</scope>
    <source>
        <strain>HAW-EB3</strain>
    </source>
</reference>
<protein>
    <recommendedName>
        <fullName evidence="1">Tryptophanase</fullName>
        <ecNumber evidence="1">4.1.99.1</ecNumber>
    </recommendedName>
    <alternativeName>
        <fullName evidence="1">L-tryptophan indole-lyase</fullName>
        <shortName evidence="1">TNase</shortName>
    </alternativeName>
</protein>
<dbReference type="EC" id="4.1.99.1" evidence="1"/>
<dbReference type="EMBL" id="CP000821">
    <property type="protein sequence ID" value="ABV38520.1"/>
    <property type="molecule type" value="Genomic_DNA"/>
</dbReference>
<dbReference type="RefSeq" id="WP_012144250.1">
    <property type="nucleotide sequence ID" value="NC_009831.1"/>
</dbReference>
<dbReference type="SMR" id="A8G097"/>
<dbReference type="STRING" id="425104.Ssed_3916"/>
<dbReference type="KEGG" id="sse:Ssed_3916"/>
<dbReference type="eggNOG" id="COG3033">
    <property type="taxonomic scope" value="Bacteria"/>
</dbReference>
<dbReference type="HOGENOM" id="CLU_047223_0_0_6"/>
<dbReference type="OrthoDB" id="9764079at2"/>
<dbReference type="UniPathway" id="UPA00332">
    <property type="reaction ID" value="UER00452"/>
</dbReference>
<dbReference type="Proteomes" id="UP000002015">
    <property type="component" value="Chromosome"/>
</dbReference>
<dbReference type="GO" id="GO:0009034">
    <property type="term" value="F:tryptophanase activity"/>
    <property type="evidence" value="ECO:0007669"/>
    <property type="project" value="UniProtKB-UniRule"/>
</dbReference>
<dbReference type="CDD" id="cd00617">
    <property type="entry name" value="Tnase_like"/>
    <property type="match status" value="1"/>
</dbReference>
<dbReference type="Gene3D" id="3.90.1150.10">
    <property type="entry name" value="Aspartate Aminotransferase, domain 1"/>
    <property type="match status" value="1"/>
</dbReference>
<dbReference type="Gene3D" id="3.40.640.10">
    <property type="entry name" value="Type I PLP-dependent aspartate aminotransferase-like (Major domain)"/>
    <property type="match status" value="1"/>
</dbReference>
<dbReference type="HAMAP" id="MF_00544">
    <property type="entry name" value="Tryptophanase"/>
    <property type="match status" value="1"/>
</dbReference>
<dbReference type="InterPro" id="IPR001597">
    <property type="entry name" value="ArAA_b-elim_lyase/Thr_aldolase"/>
</dbReference>
<dbReference type="InterPro" id="IPR011166">
    <property type="entry name" value="Beta-eliminating_lyase"/>
</dbReference>
<dbReference type="InterPro" id="IPR015424">
    <property type="entry name" value="PyrdxlP-dep_Trfase"/>
</dbReference>
<dbReference type="InterPro" id="IPR015421">
    <property type="entry name" value="PyrdxlP-dep_Trfase_major"/>
</dbReference>
<dbReference type="InterPro" id="IPR015422">
    <property type="entry name" value="PyrdxlP-dep_Trfase_small"/>
</dbReference>
<dbReference type="InterPro" id="IPR013440">
    <property type="entry name" value="TNase"/>
</dbReference>
<dbReference type="NCBIfam" id="NF009709">
    <property type="entry name" value="PRK13238.1"/>
    <property type="match status" value="1"/>
</dbReference>
<dbReference type="PANTHER" id="PTHR32325">
    <property type="entry name" value="BETA-ELIMINATING LYASE-LIKE PROTEIN-RELATED"/>
    <property type="match status" value="1"/>
</dbReference>
<dbReference type="PANTHER" id="PTHR32325:SF4">
    <property type="entry name" value="TRYPTOPHANASE"/>
    <property type="match status" value="1"/>
</dbReference>
<dbReference type="Pfam" id="PF01212">
    <property type="entry name" value="Beta_elim_lyase"/>
    <property type="match status" value="1"/>
</dbReference>
<dbReference type="PIRSF" id="PIRSF001386">
    <property type="entry name" value="Trpase"/>
    <property type="match status" value="1"/>
</dbReference>
<dbReference type="SUPFAM" id="SSF53383">
    <property type="entry name" value="PLP-dependent transferases"/>
    <property type="match status" value="1"/>
</dbReference>
<comment type="catalytic activity">
    <reaction evidence="1">
        <text>L-tryptophan + H2O = indole + pyruvate + NH4(+)</text>
        <dbReference type="Rhea" id="RHEA:19553"/>
        <dbReference type="ChEBI" id="CHEBI:15361"/>
        <dbReference type="ChEBI" id="CHEBI:15377"/>
        <dbReference type="ChEBI" id="CHEBI:16881"/>
        <dbReference type="ChEBI" id="CHEBI:28938"/>
        <dbReference type="ChEBI" id="CHEBI:57912"/>
        <dbReference type="EC" id="4.1.99.1"/>
    </reaction>
</comment>
<comment type="cofactor">
    <cofactor evidence="1">
        <name>pyridoxal 5'-phosphate</name>
        <dbReference type="ChEBI" id="CHEBI:597326"/>
    </cofactor>
</comment>
<comment type="pathway">
    <text evidence="1">Amino-acid degradation; L-tryptophan degradation via pyruvate pathway; indole and pyruvate from L-tryptophan: step 1/1.</text>
</comment>
<comment type="subunit">
    <text evidence="1">Homotetramer.</text>
</comment>
<comment type="similarity">
    <text evidence="1">Belongs to the beta-eliminating lyase family.</text>
</comment>
<gene>
    <name evidence="1" type="primary">tnaA</name>
    <name type="ordered locus">Ssed_3916</name>
</gene>
<proteinExistence type="inferred from homology"/>
<evidence type="ECO:0000255" key="1">
    <source>
        <dbReference type="HAMAP-Rule" id="MF_00544"/>
    </source>
</evidence>